<accession>Q7N288</accession>
<dbReference type="EC" id="4.2.1.17" evidence="1"/>
<dbReference type="EC" id="5.1.2.3" evidence="1"/>
<dbReference type="EC" id="1.1.1.35" evidence="1"/>
<dbReference type="EMBL" id="BX571869">
    <property type="protein sequence ID" value="CAE15574.1"/>
    <property type="status" value="ALT_INIT"/>
    <property type="molecule type" value="Genomic_DNA"/>
</dbReference>
<dbReference type="RefSeq" id="WP_011147407.1">
    <property type="nucleotide sequence ID" value="NC_005126.1"/>
</dbReference>
<dbReference type="SMR" id="Q7N288"/>
<dbReference type="STRING" id="243265.plu3200"/>
<dbReference type="GeneID" id="48849460"/>
<dbReference type="KEGG" id="plu:plu3200"/>
<dbReference type="eggNOG" id="COG1024">
    <property type="taxonomic scope" value="Bacteria"/>
</dbReference>
<dbReference type="eggNOG" id="COG1250">
    <property type="taxonomic scope" value="Bacteria"/>
</dbReference>
<dbReference type="HOGENOM" id="CLU_009834_16_1_6"/>
<dbReference type="OrthoDB" id="5389341at2"/>
<dbReference type="UniPathway" id="UPA00659"/>
<dbReference type="Proteomes" id="UP000002514">
    <property type="component" value="Chromosome"/>
</dbReference>
<dbReference type="GO" id="GO:0005737">
    <property type="term" value="C:cytoplasm"/>
    <property type="evidence" value="ECO:0007669"/>
    <property type="project" value="UniProtKB-SubCell"/>
</dbReference>
<dbReference type="GO" id="GO:0008692">
    <property type="term" value="F:3-hydroxybutyryl-CoA epimerase activity"/>
    <property type="evidence" value="ECO:0007669"/>
    <property type="project" value="UniProtKB-UniRule"/>
</dbReference>
<dbReference type="GO" id="GO:0004300">
    <property type="term" value="F:enoyl-CoA hydratase activity"/>
    <property type="evidence" value="ECO:0007669"/>
    <property type="project" value="UniProtKB-UniRule"/>
</dbReference>
<dbReference type="GO" id="GO:0016509">
    <property type="term" value="F:long-chain-3-hydroxyacyl-CoA dehydrogenase activity"/>
    <property type="evidence" value="ECO:0007669"/>
    <property type="project" value="TreeGrafter"/>
</dbReference>
<dbReference type="GO" id="GO:0070403">
    <property type="term" value="F:NAD+ binding"/>
    <property type="evidence" value="ECO:0007669"/>
    <property type="project" value="InterPro"/>
</dbReference>
<dbReference type="GO" id="GO:0006635">
    <property type="term" value="P:fatty acid beta-oxidation"/>
    <property type="evidence" value="ECO:0007669"/>
    <property type="project" value="UniProtKB-UniRule"/>
</dbReference>
<dbReference type="CDD" id="cd06558">
    <property type="entry name" value="crotonase-like"/>
    <property type="match status" value="1"/>
</dbReference>
<dbReference type="FunFam" id="3.90.226.10:FF:000011">
    <property type="entry name" value="Fatty acid oxidation complex subunit alpha"/>
    <property type="match status" value="1"/>
</dbReference>
<dbReference type="FunFam" id="3.40.50.720:FF:000009">
    <property type="entry name" value="Fatty oxidation complex, alpha subunit"/>
    <property type="match status" value="1"/>
</dbReference>
<dbReference type="Gene3D" id="1.10.1040.50">
    <property type="match status" value="1"/>
</dbReference>
<dbReference type="Gene3D" id="3.90.226.10">
    <property type="entry name" value="2-enoyl-CoA Hydratase, Chain A, domain 1"/>
    <property type="match status" value="1"/>
</dbReference>
<dbReference type="Gene3D" id="3.40.50.720">
    <property type="entry name" value="NAD(P)-binding Rossmann-like Domain"/>
    <property type="match status" value="1"/>
</dbReference>
<dbReference type="HAMAP" id="MF_01617">
    <property type="entry name" value="FadJ"/>
    <property type="match status" value="1"/>
</dbReference>
<dbReference type="InterPro" id="IPR006180">
    <property type="entry name" value="3-OHacyl-CoA_DH_CS"/>
</dbReference>
<dbReference type="InterPro" id="IPR006176">
    <property type="entry name" value="3-OHacyl-CoA_DH_NAD-bd"/>
</dbReference>
<dbReference type="InterPro" id="IPR006108">
    <property type="entry name" value="3HC_DH_C"/>
</dbReference>
<dbReference type="InterPro" id="IPR008927">
    <property type="entry name" value="6-PGluconate_DH-like_C_sf"/>
</dbReference>
<dbReference type="InterPro" id="IPR029045">
    <property type="entry name" value="ClpP/crotonase-like_dom_sf"/>
</dbReference>
<dbReference type="InterPro" id="IPR001753">
    <property type="entry name" value="Enoyl-CoA_hydra/iso"/>
</dbReference>
<dbReference type="InterPro" id="IPR050136">
    <property type="entry name" value="FA_oxidation_alpha_subunit"/>
</dbReference>
<dbReference type="InterPro" id="IPR012802">
    <property type="entry name" value="FadJ"/>
</dbReference>
<dbReference type="InterPro" id="IPR036291">
    <property type="entry name" value="NAD(P)-bd_dom_sf"/>
</dbReference>
<dbReference type="NCBIfam" id="TIGR02440">
    <property type="entry name" value="FadJ"/>
    <property type="match status" value="1"/>
</dbReference>
<dbReference type="NCBIfam" id="NF008363">
    <property type="entry name" value="PRK11154.1"/>
    <property type="match status" value="1"/>
</dbReference>
<dbReference type="PANTHER" id="PTHR43612">
    <property type="entry name" value="TRIFUNCTIONAL ENZYME SUBUNIT ALPHA"/>
    <property type="match status" value="1"/>
</dbReference>
<dbReference type="PANTHER" id="PTHR43612:SF3">
    <property type="entry name" value="TRIFUNCTIONAL ENZYME SUBUNIT ALPHA, MITOCHONDRIAL"/>
    <property type="match status" value="1"/>
</dbReference>
<dbReference type="Pfam" id="PF00725">
    <property type="entry name" value="3HCDH"/>
    <property type="match status" value="2"/>
</dbReference>
<dbReference type="Pfam" id="PF02737">
    <property type="entry name" value="3HCDH_N"/>
    <property type="match status" value="1"/>
</dbReference>
<dbReference type="Pfam" id="PF00378">
    <property type="entry name" value="ECH_1"/>
    <property type="match status" value="1"/>
</dbReference>
<dbReference type="SUPFAM" id="SSF48179">
    <property type="entry name" value="6-phosphogluconate dehydrogenase C-terminal domain-like"/>
    <property type="match status" value="2"/>
</dbReference>
<dbReference type="SUPFAM" id="SSF52096">
    <property type="entry name" value="ClpP/crotonase"/>
    <property type="match status" value="1"/>
</dbReference>
<dbReference type="SUPFAM" id="SSF51735">
    <property type="entry name" value="NAD(P)-binding Rossmann-fold domains"/>
    <property type="match status" value="1"/>
</dbReference>
<dbReference type="PROSITE" id="PS00067">
    <property type="entry name" value="3HCDH"/>
    <property type="match status" value="1"/>
</dbReference>
<comment type="function">
    <text evidence="1">Catalyzes the formation of a hydroxyacyl-CoA by addition of water on enoyl-CoA. Also exhibits 3-hydroxyacyl-CoA epimerase and 3-hydroxyacyl-CoA dehydrogenase activities.</text>
</comment>
<comment type="catalytic activity">
    <reaction evidence="1">
        <text>a (3S)-3-hydroxyacyl-CoA = a (2E)-enoyl-CoA + H2O</text>
        <dbReference type="Rhea" id="RHEA:16105"/>
        <dbReference type="ChEBI" id="CHEBI:15377"/>
        <dbReference type="ChEBI" id="CHEBI:57318"/>
        <dbReference type="ChEBI" id="CHEBI:58856"/>
        <dbReference type="EC" id="4.2.1.17"/>
    </reaction>
</comment>
<comment type="catalytic activity">
    <reaction evidence="1">
        <text>a 4-saturated-(3S)-3-hydroxyacyl-CoA = a (3E)-enoyl-CoA + H2O</text>
        <dbReference type="Rhea" id="RHEA:20724"/>
        <dbReference type="ChEBI" id="CHEBI:15377"/>
        <dbReference type="ChEBI" id="CHEBI:58521"/>
        <dbReference type="ChEBI" id="CHEBI:137480"/>
        <dbReference type="EC" id="4.2.1.17"/>
    </reaction>
</comment>
<comment type="catalytic activity">
    <reaction evidence="1">
        <text>a (3S)-3-hydroxyacyl-CoA + NAD(+) = a 3-oxoacyl-CoA + NADH + H(+)</text>
        <dbReference type="Rhea" id="RHEA:22432"/>
        <dbReference type="ChEBI" id="CHEBI:15378"/>
        <dbReference type="ChEBI" id="CHEBI:57318"/>
        <dbReference type="ChEBI" id="CHEBI:57540"/>
        <dbReference type="ChEBI" id="CHEBI:57945"/>
        <dbReference type="ChEBI" id="CHEBI:90726"/>
        <dbReference type="EC" id="1.1.1.35"/>
    </reaction>
</comment>
<comment type="catalytic activity">
    <reaction evidence="1">
        <text>(3S)-3-hydroxybutanoyl-CoA = (3R)-3-hydroxybutanoyl-CoA</text>
        <dbReference type="Rhea" id="RHEA:21760"/>
        <dbReference type="ChEBI" id="CHEBI:57315"/>
        <dbReference type="ChEBI" id="CHEBI:57316"/>
        <dbReference type="EC" id="5.1.2.3"/>
    </reaction>
</comment>
<comment type="pathway">
    <text evidence="1">Lipid metabolism; fatty acid beta-oxidation.</text>
</comment>
<comment type="subunit">
    <text evidence="1">Heterotetramer of two alpha chains (FadJ) and two beta chains (FadI).</text>
</comment>
<comment type="subcellular location">
    <subcellularLocation>
        <location evidence="1">Cytoplasm</location>
    </subcellularLocation>
</comment>
<comment type="similarity">
    <text evidence="1">In the N-terminal section; belongs to the enoyl-CoA hydratase/isomerase family.</text>
</comment>
<comment type="similarity">
    <text evidence="1">In the central section; belongs to the 3-hydroxyacyl-CoA dehydrogenase family.</text>
</comment>
<comment type="sequence caution" evidence="2">
    <conflict type="erroneous initiation">
        <sequence resource="EMBL-CDS" id="CAE15574"/>
    </conflict>
</comment>
<evidence type="ECO:0000255" key="1">
    <source>
        <dbReference type="HAMAP-Rule" id="MF_01617"/>
    </source>
</evidence>
<evidence type="ECO:0000305" key="2"/>
<feature type="chain" id="PRO_0000109303" description="Fatty acid oxidation complex subunit alpha">
    <location>
        <begin position="1"/>
        <end position="727"/>
    </location>
</feature>
<feature type="region of interest" description="Enoyl-CoA hydratase" evidence="1">
    <location>
        <begin position="16"/>
        <end position="205"/>
    </location>
</feature>
<feature type="region of interest" description="3-hydroxyacyl-CoA dehydrogenase" evidence="1">
    <location>
        <begin position="321"/>
        <end position="727"/>
    </location>
</feature>
<feature type="site" description="Important for catalytic activity" evidence="1">
    <location>
        <position position="133"/>
    </location>
</feature>
<feature type="site" description="Important for catalytic activity" evidence="1">
    <location>
        <position position="155"/>
    </location>
</feature>
<proteinExistence type="inferred from homology"/>
<name>FADJ_PHOLL</name>
<keyword id="KW-0963">Cytoplasm</keyword>
<keyword id="KW-0276">Fatty acid metabolism</keyword>
<keyword id="KW-0413">Isomerase</keyword>
<keyword id="KW-0442">Lipid degradation</keyword>
<keyword id="KW-0443">Lipid metabolism</keyword>
<keyword id="KW-0456">Lyase</keyword>
<keyword id="KW-0511">Multifunctional enzyme</keyword>
<keyword id="KW-0520">NAD</keyword>
<keyword id="KW-0560">Oxidoreductase</keyword>
<keyword id="KW-1185">Reference proteome</keyword>
<gene>
    <name evidence="1" type="primary">fadJ</name>
    <name type="ordered locus">plu3200</name>
</gene>
<sequence length="727" mass="79265">MTQAQHDAAPITTGTNQTASVFSFDVRPDKIGIITINVPGEKVNTLKAEFVDQFLNVFKQAQQSSGLKGLILISGKPDTFIAGADISMIAGCKTKEDARDLAEKGQKLFSQIANYPLPVVAAIHGACLGGGLELALACHWRVCSQDDKTRLGLPEVQLGLLPGSGGTQRLPRLIGVSSALDIMLTGKQLRAKQALRLGLVDDAVPLDILLDIAIEKVKKGIPVRKPLPWQQRLLVGPVGRYFLFNIVRKKTLAKTRGHYPAPERIIEVVKEGLEKGMSQGLRAEAVAFGELAMTRESAALRNLFFAATSLKNETGSSEKPAKIKHVGILGGGLMGGGIANVTATRGKLPVRIKDINEKGISQVLKYTWDLLSKRVKQKRLRPAERAQQMMLISGTTDYRGFAQTDIVVEAVFEDLSLKQKMVAEIETNAKPETIFASNTSSLPIHQIAEKAQRPEQVIGLHYFSPVDKMPLVEVIPHQGTSEKTIATAVSLAKKQGKTAIVVGDKAGFYVNRILVPYISEAAHCLVAGEPIDHIDGALVNFGFPVGPINLLDEVGIDVGTKIMPVLVEQLGPRFAAPESLDAVLKDGRKGRKNGRGFYLYAPGPRKFWQFGKRDKKVDSSVYTLLNITPESHMLSSEIAQRCVMLMLNEAVRCLDEGIIRSPRDGDIGAVFGIGFPPFFGGPFRYIDSLGCARVVEILRRLESQYGDRFVPCECLVNMAEQNKSFYP</sequence>
<organism>
    <name type="scientific">Photorhabdus laumondii subsp. laumondii (strain DSM 15139 / CIP 105565 / TT01)</name>
    <name type="common">Photorhabdus luminescens subsp. laumondii</name>
    <dbReference type="NCBI Taxonomy" id="243265"/>
    <lineage>
        <taxon>Bacteria</taxon>
        <taxon>Pseudomonadati</taxon>
        <taxon>Pseudomonadota</taxon>
        <taxon>Gammaproteobacteria</taxon>
        <taxon>Enterobacterales</taxon>
        <taxon>Morganellaceae</taxon>
        <taxon>Photorhabdus</taxon>
    </lineage>
</organism>
<reference key="1">
    <citation type="journal article" date="2003" name="Nat. Biotechnol.">
        <title>The genome sequence of the entomopathogenic bacterium Photorhabdus luminescens.</title>
        <authorList>
            <person name="Duchaud E."/>
            <person name="Rusniok C."/>
            <person name="Frangeul L."/>
            <person name="Buchrieser C."/>
            <person name="Givaudan A."/>
            <person name="Taourit S."/>
            <person name="Bocs S."/>
            <person name="Boursaux-Eude C."/>
            <person name="Chandler M."/>
            <person name="Charles J.-F."/>
            <person name="Dassa E."/>
            <person name="Derose R."/>
            <person name="Derzelle S."/>
            <person name="Freyssinet G."/>
            <person name="Gaudriault S."/>
            <person name="Medigue C."/>
            <person name="Lanois A."/>
            <person name="Powell K."/>
            <person name="Siguier P."/>
            <person name="Vincent R."/>
            <person name="Wingate V."/>
            <person name="Zouine M."/>
            <person name="Glaser P."/>
            <person name="Boemare N."/>
            <person name="Danchin A."/>
            <person name="Kunst F."/>
        </authorList>
    </citation>
    <scope>NUCLEOTIDE SEQUENCE [LARGE SCALE GENOMIC DNA]</scope>
    <source>
        <strain>DSM 15139 / CIP 105565 / TT01</strain>
    </source>
</reference>
<protein>
    <recommendedName>
        <fullName evidence="1">Fatty acid oxidation complex subunit alpha</fullName>
    </recommendedName>
    <domain>
        <recommendedName>
            <fullName evidence="1">Enoyl-CoA hydratase/3-hydroxybutyryl-CoA epimerase</fullName>
            <ecNumber evidence="1">4.2.1.17</ecNumber>
            <ecNumber evidence="1">5.1.2.3</ecNumber>
        </recommendedName>
    </domain>
    <domain>
        <recommendedName>
            <fullName evidence="1">3-hydroxyacyl-CoA dehydrogenase</fullName>
            <ecNumber evidence="1">1.1.1.35</ecNumber>
        </recommendedName>
    </domain>
</protein>